<dbReference type="EC" id="6.1.1.3" evidence="1"/>
<dbReference type="EMBL" id="CP000480">
    <property type="protein sequence ID" value="ABK73551.1"/>
    <property type="molecule type" value="Genomic_DNA"/>
</dbReference>
<dbReference type="EMBL" id="CP001663">
    <property type="protein sequence ID" value="AFP39321.1"/>
    <property type="molecule type" value="Genomic_DNA"/>
</dbReference>
<dbReference type="RefSeq" id="WP_011728699.1">
    <property type="nucleotide sequence ID" value="NZ_SIJM01000002.1"/>
</dbReference>
<dbReference type="RefSeq" id="YP_887250.1">
    <property type="nucleotide sequence ID" value="NC_008596.1"/>
</dbReference>
<dbReference type="SMR" id="A0QWG2"/>
<dbReference type="STRING" id="246196.MSMEG_2931"/>
<dbReference type="PaxDb" id="246196-MSMEI_2857"/>
<dbReference type="GeneID" id="93457711"/>
<dbReference type="KEGG" id="msb:LJ00_14585"/>
<dbReference type="KEGG" id="msg:MSMEI_2857"/>
<dbReference type="KEGG" id="msm:MSMEG_2931"/>
<dbReference type="PATRIC" id="fig|246196.19.peg.2894"/>
<dbReference type="eggNOG" id="COG0441">
    <property type="taxonomic scope" value="Bacteria"/>
</dbReference>
<dbReference type="OrthoDB" id="9802304at2"/>
<dbReference type="Proteomes" id="UP000000757">
    <property type="component" value="Chromosome"/>
</dbReference>
<dbReference type="Proteomes" id="UP000006158">
    <property type="component" value="Chromosome"/>
</dbReference>
<dbReference type="GO" id="GO:0005737">
    <property type="term" value="C:cytoplasm"/>
    <property type="evidence" value="ECO:0007669"/>
    <property type="project" value="UniProtKB-SubCell"/>
</dbReference>
<dbReference type="GO" id="GO:0005524">
    <property type="term" value="F:ATP binding"/>
    <property type="evidence" value="ECO:0007669"/>
    <property type="project" value="UniProtKB-UniRule"/>
</dbReference>
<dbReference type="GO" id="GO:0046872">
    <property type="term" value="F:metal ion binding"/>
    <property type="evidence" value="ECO:0007669"/>
    <property type="project" value="UniProtKB-KW"/>
</dbReference>
<dbReference type="GO" id="GO:0004829">
    <property type="term" value="F:threonine-tRNA ligase activity"/>
    <property type="evidence" value="ECO:0007669"/>
    <property type="project" value="UniProtKB-UniRule"/>
</dbReference>
<dbReference type="GO" id="GO:0000049">
    <property type="term" value="F:tRNA binding"/>
    <property type="evidence" value="ECO:0007669"/>
    <property type="project" value="UniProtKB-KW"/>
</dbReference>
<dbReference type="GO" id="GO:0006435">
    <property type="term" value="P:threonyl-tRNA aminoacylation"/>
    <property type="evidence" value="ECO:0007669"/>
    <property type="project" value="UniProtKB-UniRule"/>
</dbReference>
<dbReference type="CDD" id="cd00860">
    <property type="entry name" value="ThrRS_anticodon"/>
    <property type="match status" value="1"/>
</dbReference>
<dbReference type="CDD" id="cd00771">
    <property type="entry name" value="ThrRS_core"/>
    <property type="match status" value="1"/>
</dbReference>
<dbReference type="FunFam" id="3.30.54.20:FF:000003">
    <property type="entry name" value="Threonine--tRNA ligase"/>
    <property type="match status" value="1"/>
</dbReference>
<dbReference type="FunFam" id="3.30.930.10:FF:000019">
    <property type="entry name" value="Threonine--tRNA ligase"/>
    <property type="match status" value="1"/>
</dbReference>
<dbReference type="FunFam" id="3.40.50.800:FF:000001">
    <property type="entry name" value="Threonine--tRNA ligase"/>
    <property type="match status" value="1"/>
</dbReference>
<dbReference type="FunFam" id="3.30.980.10:FF:000005">
    <property type="entry name" value="Threonyl-tRNA synthetase, mitochondrial"/>
    <property type="match status" value="1"/>
</dbReference>
<dbReference type="Gene3D" id="3.30.54.20">
    <property type="match status" value="1"/>
</dbReference>
<dbReference type="Gene3D" id="3.40.50.800">
    <property type="entry name" value="Anticodon-binding domain"/>
    <property type="match status" value="1"/>
</dbReference>
<dbReference type="Gene3D" id="3.30.930.10">
    <property type="entry name" value="Bira Bifunctional Protein, Domain 2"/>
    <property type="match status" value="1"/>
</dbReference>
<dbReference type="Gene3D" id="3.30.980.10">
    <property type="entry name" value="Threonyl-trna Synthetase, Chain A, domain 2"/>
    <property type="match status" value="1"/>
</dbReference>
<dbReference type="HAMAP" id="MF_00184">
    <property type="entry name" value="Thr_tRNA_synth"/>
    <property type="match status" value="1"/>
</dbReference>
<dbReference type="InterPro" id="IPR002314">
    <property type="entry name" value="aa-tRNA-synt_IIb"/>
</dbReference>
<dbReference type="InterPro" id="IPR006195">
    <property type="entry name" value="aa-tRNA-synth_II"/>
</dbReference>
<dbReference type="InterPro" id="IPR045864">
    <property type="entry name" value="aa-tRNA-synth_II/BPL/LPL"/>
</dbReference>
<dbReference type="InterPro" id="IPR004154">
    <property type="entry name" value="Anticodon-bd"/>
</dbReference>
<dbReference type="InterPro" id="IPR036621">
    <property type="entry name" value="Anticodon-bd_dom_sf"/>
</dbReference>
<dbReference type="InterPro" id="IPR004095">
    <property type="entry name" value="TGS"/>
</dbReference>
<dbReference type="InterPro" id="IPR002320">
    <property type="entry name" value="Thr-tRNA-ligase_IIa"/>
</dbReference>
<dbReference type="InterPro" id="IPR018163">
    <property type="entry name" value="Thr/Ala-tRNA-synth_IIc_edit"/>
</dbReference>
<dbReference type="InterPro" id="IPR047246">
    <property type="entry name" value="ThrRS_anticodon"/>
</dbReference>
<dbReference type="InterPro" id="IPR033728">
    <property type="entry name" value="ThrRS_core"/>
</dbReference>
<dbReference type="InterPro" id="IPR012947">
    <property type="entry name" value="tRNA_SAD"/>
</dbReference>
<dbReference type="NCBIfam" id="TIGR00418">
    <property type="entry name" value="thrS"/>
    <property type="match status" value="1"/>
</dbReference>
<dbReference type="PANTHER" id="PTHR11451:SF44">
    <property type="entry name" value="THREONINE--TRNA LIGASE, CHLOROPLASTIC_MITOCHONDRIAL 2"/>
    <property type="match status" value="1"/>
</dbReference>
<dbReference type="PANTHER" id="PTHR11451">
    <property type="entry name" value="THREONINE-TRNA LIGASE"/>
    <property type="match status" value="1"/>
</dbReference>
<dbReference type="Pfam" id="PF03129">
    <property type="entry name" value="HGTP_anticodon"/>
    <property type="match status" value="1"/>
</dbReference>
<dbReference type="Pfam" id="PF00587">
    <property type="entry name" value="tRNA-synt_2b"/>
    <property type="match status" value="1"/>
</dbReference>
<dbReference type="Pfam" id="PF07973">
    <property type="entry name" value="tRNA_SAD"/>
    <property type="match status" value="1"/>
</dbReference>
<dbReference type="PRINTS" id="PR01047">
    <property type="entry name" value="TRNASYNTHTHR"/>
</dbReference>
<dbReference type="SMART" id="SM00863">
    <property type="entry name" value="tRNA_SAD"/>
    <property type="match status" value="1"/>
</dbReference>
<dbReference type="SUPFAM" id="SSF52954">
    <property type="entry name" value="Class II aaRS ABD-related"/>
    <property type="match status" value="1"/>
</dbReference>
<dbReference type="SUPFAM" id="SSF55681">
    <property type="entry name" value="Class II aaRS and biotin synthetases"/>
    <property type="match status" value="1"/>
</dbReference>
<dbReference type="SUPFAM" id="SSF55186">
    <property type="entry name" value="ThrRS/AlaRS common domain"/>
    <property type="match status" value="1"/>
</dbReference>
<dbReference type="PROSITE" id="PS50862">
    <property type="entry name" value="AA_TRNA_LIGASE_II"/>
    <property type="match status" value="1"/>
</dbReference>
<dbReference type="PROSITE" id="PS51880">
    <property type="entry name" value="TGS"/>
    <property type="match status" value="1"/>
</dbReference>
<proteinExistence type="inferred from homology"/>
<sequence length="684" mass="77011">MTAVASSAPAAPIRVPAGTTAGAAVREADLPGRGAPDAIVVVRDAEGRLRDLSWTPDTDVEVTPVAADTEEGRSVIRHSCAHVLAQAVQELFPQAKLGIGPPITDGFYYDFDVEEPFTPEDLERLEKRMRQIIKDGQLFSRRVYESKDAAREELANEPYKLELVDDKSGDPDVMEVGGDELTAYDNLNARTKERVWGDLCRGPHIPTTRYIPAFKLTRSSAAYWRGDQNNASLQRIYGTAWESQEALDRHLELIEEAQRRDHRKLGVELDLFSFPDELGSGLPVFHPRGGVVRRELEDYSRRKHLEAGYEFVNTPHITKEQLYVTSGHLEWYADGMFPAMHIDAEYDADGQVRKPGQNYYLKPMNCPMHHLIFRSRGRSYRELPLRLFEFGSVYRYEKSGVVHGLTRVRGMTQDDAHIYTTREQMRDELTRLLEFVLSLLKDYGLDDYYLELSTKDPEKYVGSDEIWEEATETLREVAEASGLDLVPDPGGAAFYGPKISVQVKDALGRSWQMSTIQLDFNMPDRFELEYTAADGSRRRPVLIHRALFGSIERFFGVLTEHYAGAFPAWLAPVQVVGIPVADAHTPYLEEVAAQLKSRGVRVEVDSSDDRMAKKIVNHTNMKVPFMLLAGDKDAEAGAVSFRFGDRTQINGVPRDEAVEMIVRWIADRINEVPTAETVKAGAAK</sequence>
<name>SYT_MYCS2</name>
<keyword id="KW-0030">Aminoacyl-tRNA synthetase</keyword>
<keyword id="KW-0067">ATP-binding</keyword>
<keyword id="KW-0963">Cytoplasm</keyword>
<keyword id="KW-0436">Ligase</keyword>
<keyword id="KW-0479">Metal-binding</keyword>
<keyword id="KW-0547">Nucleotide-binding</keyword>
<keyword id="KW-0648">Protein biosynthesis</keyword>
<keyword id="KW-1185">Reference proteome</keyword>
<keyword id="KW-0694">RNA-binding</keyword>
<keyword id="KW-0820">tRNA-binding</keyword>
<keyword id="KW-0862">Zinc</keyword>
<feature type="chain" id="PRO_1000020440" description="Threonine--tRNA ligase">
    <location>
        <begin position="1"/>
        <end position="684"/>
    </location>
</feature>
<feature type="domain" description="TGS" evidence="2">
    <location>
        <begin position="1"/>
        <end position="66"/>
    </location>
</feature>
<feature type="region of interest" description="Catalytic" evidence="1">
    <location>
        <begin position="261"/>
        <end position="567"/>
    </location>
</feature>
<feature type="binding site" evidence="1">
    <location>
        <position position="366"/>
    </location>
    <ligand>
        <name>Zn(2+)</name>
        <dbReference type="ChEBI" id="CHEBI:29105"/>
    </ligand>
</feature>
<feature type="binding site" evidence="1">
    <location>
        <position position="417"/>
    </location>
    <ligand>
        <name>Zn(2+)</name>
        <dbReference type="ChEBI" id="CHEBI:29105"/>
    </ligand>
</feature>
<feature type="binding site" evidence="1">
    <location>
        <position position="544"/>
    </location>
    <ligand>
        <name>Zn(2+)</name>
        <dbReference type="ChEBI" id="CHEBI:29105"/>
    </ligand>
</feature>
<comment type="function">
    <text evidence="1">Catalyzes the attachment of threonine to tRNA(Thr) in a two-step reaction: L-threonine is first activated by ATP to form Thr-AMP and then transferred to the acceptor end of tRNA(Thr). Also edits incorrectly charged L-seryl-tRNA(Thr).</text>
</comment>
<comment type="catalytic activity">
    <reaction evidence="1">
        <text>tRNA(Thr) + L-threonine + ATP = L-threonyl-tRNA(Thr) + AMP + diphosphate + H(+)</text>
        <dbReference type="Rhea" id="RHEA:24624"/>
        <dbReference type="Rhea" id="RHEA-COMP:9670"/>
        <dbReference type="Rhea" id="RHEA-COMP:9704"/>
        <dbReference type="ChEBI" id="CHEBI:15378"/>
        <dbReference type="ChEBI" id="CHEBI:30616"/>
        <dbReference type="ChEBI" id="CHEBI:33019"/>
        <dbReference type="ChEBI" id="CHEBI:57926"/>
        <dbReference type="ChEBI" id="CHEBI:78442"/>
        <dbReference type="ChEBI" id="CHEBI:78534"/>
        <dbReference type="ChEBI" id="CHEBI:456215"/>
        <dbReference type="EC" id="6.1.1.3"/>
    </reaction>
</comment>
<comment type="cofactor">
    <cofactor evidence="1">
        <name>Zn(2+)</name>
        <dbReference type="ChEBI" id="CHEBI:29105"/>
    </cofactor>
    <text evidence="1">Binds 1 zinc ion per subunit.</text>
</comment>
<comment type="subunit">
    <text evidence="1">Homodimer.</text>
</comment>
<comment type="subcellular location">
    <subcellularLocation>
        <location evidence="1">Cytoplasm</location>
    </subcellularLocation>
</comment>
<comment type="similarity">
    <text evidence="1">Belongs to the class-II aminoacyl-tRNA synthetase family.</text>
</comment>
<evidence type="ECO:0000255" key="1">
    <source>
        <dbReference type="HAMAP-Rule" id="MF_00184"/>
    </source>
</evidence>
<evidence type="ECO:0000255" key="2">
    <source>
        <dbReference type="PROSITE-ProRule" id="PRU01228"/>
    </source>
</evidence>
<protein>
    <recommendedName>
        <fullName evidence="1">Threonine--tRNA ligase</fullName>
        <ecNumber evidence="1">6.1.1.3</ecNumber>
    </recommendedName>
    <alternativeName>
        <fullName evidence="1">Threonyl-tRNA synthetase</fullName>
        <shortName evidence="1">ThrRS</shortName>
    </alternativeName>
</protein>
<accession>A0QWG2</accession>
<accession>I7G7V4</accession>
<reference key="1">
    <citation type="submission" date="2006-10" db="EMBL/GenBank/DDBJ databases">
        <authorList>
            <person name="Fleischmann R.D."/>
            <person name="Dodson R.J."/>
            <person name="Haft D.H."/>
            <person name="Merkel J.S."/>
            <person name="Nelson W.C."/>
            <person name="Fraser C.M."/>
        </authorList>
    </citation>
    <scope>NUCLEOTIDE SEQUENCE [LARGE SCALE GENOMIC DNA]</scope>
    <source>
        <strain>ATCC 700084 / mc(2)155</strain>
    </source>
</reference>
<reference key="2">
    <citation type="journal article" date="2007" name="Genome Biol.">
        <title>Interrupted coding sequences in Mycobacterium smegmatis: authentic mutations or sequencing errors?</title>
        <authorList>
            <person name="Deshayes C."/>
            <person name="Perrodou E."/>
            <person name="Gallien S."/>
            <person name="Euphrasie D."/>
            <person name="Schaeffer C."/>
            <person name="Van-Dorsselaer A."/>
            <person name="Poch O."/>
            <person name="Lecompte O."/>
            <person name="Reyrat J.-M."/>
        </authorList>
    </citation>
    <scope>NUCLEOTIDE SEQUENCE [LARGE SCALE GENOMIC DNA]</scope>
    <source>
        <strain>ATCC 700084 / mc(2)155</strain>
    </source>
</reference>
<reference key="3">
    <citation type="journal article" date="2009" name="Genome Res.">
        <title>Ortho-proteogenomics: multiple proteomes investigation through orthology and a new MS-based protocol.</title>
        <authorList>
            <person name="Gallien S."/>
            <person name="Perrodou E."/>
            <person name="Carapito C."/>
            <person name="Deshayes C."/>
            <person name="Reyrat J.-M."/>
            <person name="Van Dorsselaer A."/>
            <person name="Poch O."/>
            <person name="Schaeffer C."/>
            <person name="Lecompte O."/>
        </authorList>
    </citation>
    <scope>NUCLEOTIDE SEQUENCE [LARGE SCALE GENOMIC DNA]</scope>
    <source>
        <strain>ATCC 700084 / mc(2)155</strain>
    </source>
</reference>
<organism>
    <name type="scientific">Mycolicibacterium smegmatis (strain ATCC 700084 / mc(2)155)</name>
    <name type="common">Mycobacterium smegmatis</name>
    <dbReference type="NCBI Taxonomy" id="246196"/>
    <lineage>
        <taxon>Bacteria</taxon>
        <taxon>Bacillati</taxon>
        <taxon>Actinomycetota</taxon>
        <taxon>Actinomycetes</taxon>
        <taxon>Mycobacteriales</taxon>
        <taxon>Mycobacteriaceae</taxon>
        <taxon>Mycolicibacterium</taxon>
    </lineage>
</organism>
<gene>
    <name evidence="1" type="primary">thrS</name>
    <name type="ordered locus">MSMEG_2931</name>
    <name type="ordered locus">MSMEI_2857</name>
</gene>